<accession>O95486</accession>
<accession>A8MVW3</accession>
<accession>Q8WUV2</accession>
<accession>Q96GP7</accession>
<protein>
    <recommendedName>
        <fullName evidence="11">Protein transport protein Sec24A</fullName>
    </recommendedName>
    <alternativeName>
        <fullName>SEC24-related protein A</fullName>
    </alternativeName>
</protein>
<feature type="chain" id="PRO_0000205153" description="Protein transport protein Sec24A">
    <location>
        <begin position="1"/>
        <end position="1093"/>
    </location>
</feature>
<feature type="repeat" description="Gelsolin-like" evidence="1">
    <location>
        <begin position="966"/>
        <end position="1038"/>
    </location>
</feature>
<feature type="region of interest" description="Disordered" evidence="2">
    <location>
        <begin position="1"/>
        <end position="29"/>
    </location>
</feature>
<feature type="region of interest" description="Disordered" evidence="2">
    <location>
        <begin position="60"/>
        <end position="168"/>
    </location>
</feature>
<feature type="region of interest" description="Disordered" evidence="2">
    <location>
        <begin position="189"/>
        <end position="226"/>
    </location>
</feature>
<feature type="region of interest" description="Disordered" evidence="2">
    <location>
        <begin position="294"/>
        <end position="328"/>
    </location>
</feature>
<feature type="region of interest" description="Zinc finger-like">
    <location>
        <begin position="431"/>
        <end position="455"/>
    </location>
</feature>
<feature type="compositionally biased region" description="Polar residues" evidence="2">
    <location>
        <begin position="112"/>
        <end position="126"/>
    </location>
</feature>
<feature type="compositionally biased region" description="Polar residues" evidence="2">
    <location>
        <begin position="138"/>
        <end position="168"/>
    </location>
</feature>
<feature type="compositionally biased region" description="Pro residues" evidence="2">
    <location>
        <begin position="191"/>
        <end position="201"/>
    </location>
</feature>
<feature type="compositionally biased region" description="Pro residues" evidence="2">
    <location>
        <begin position="209"/>
        <end position="221"/>
    </location>
</feature>
<feature type="compositionally biased region" description="Polar residues" evidence="2">
    <location>
        <begin position="299"/>
        <end position="328"/>
    </location>
</feature>
<feature type="binding site" evidence="14 16">
    <location>
        <position position="431"/>
    </location>
    <ligand>
        <name>Zn(2+)</name>
        <dbReference type="ChEBI" id="CHEBI:29105"/>
    </ligand>
</feature>
<feature type="binding site" evidence="14 16">
    <location>
        <position position="434"/>
    </location>
    <ligand>
        <name>Zn(2+)</name>
        <dbReference type="ChEBI" id="CHEBI:29105"/>
    </ligand>
</feature>
<feature type="binding site" evidence="14 16">
    <location>
        <position position="452"/>
    </location>
    <ligand>
        <name>Zn(2+)</name>
        <dbReference type="ChEBI" id="CHEBI:29105"/>
    </ligand>
</feature>
<feature type="binding site" evidence="14 16">
    <location>
        <position position="455"/>
    </location>
    <ligand>
        <name>Zn(2+)</name>
        <dbReference type="ChEBI" id="CHEBI:29105"/>
    </ligand>
</feature>
<feature type="splice variant" id="VSP_029571" description="In isoform 2." evidence="10">
    <original>LVQDLLKTLPQMFTKTLETQ</original>
    <variation>SVIGVSSEETLITCLEIAMR</variation>
    <location>
        <begin position="594"/>
        <end position="613"/>
    </location>
</feature>
<feature type="splice variant" id="VSP_029572" description="In isoform 2." evidence="10">
    <location>
        <begin position="614"/>
        <end position="1093"/>
    </location>
</feature>
<feature type="sequence variant" id="VAR_037253" description="In dbSNP:rs7718102.">
    <original>S</original>
    <variation>G</variation>
    <location>
        <position position="261"/>
    </location>
</feature>
<feature type="sequence variant" id="VAR_037254" description="In dbSNP:rs17851746." evidence="3">
    <original>T</original>
    <variation>I</variation>
    <location>
        <position position="302"/>
    </location>
</feature>
<feature type="sequence variant" id="VAR_037255" description="In dbSNP:rs17851745." evidence="3">
    <original>T</original>
    <variation>M</variation>
    <location>
        <position position="396"/>
    </location>
</feature>
<feature type="mutagenesis site" description="Decreased ability to interact with and package the SNARE SEC22B cargo into COPII vesicles. Has no effect on other cargos packaging." evidence="4">
    <original>R</original>
    <variation>A</variation>
    <location>
        <position position="541"/>
    </location>
</feature>
<feature type="strand" evidence="19">
    <location>
        <begin position="350"/>
        <end position="352"/>
    </location>
</feature>
<feature type="helix" evidence="19">
    <location>
        <begin position="353"/>
        <end position="356"/>
    </location>
</feature>
<feature type="helix" evidence="19">
    <location>
        <begin position="374"/>
        <end position="377"/>
    </location>
</feature>
<feature type="turn" evidence="19">
    <location>
        <begin position="383"/>
        <end position="385"/>
    </location>
</feature>
<feature type="strand" evidence="19">
    <location>
        <begin position="386"/>
        <end position="396"/>
    </location>
</feature>
<feature type="helix" evidence="19">
    <location>
        <begin position="397"/>
        <end position="403"/>
    </location>
</feature>
<feature type="strand" evidence="19">
    <location>
        <begin position="408"/>
        <end position="411"/>
    </location>
</feature>
<feature type="turn" evidence="19">
    <location>
        <begin position="432"/>
        <end position="434"/>
    </location>
</feature>
<feature type="strand" evidence="19">
    <location>
        <begin position="442"/>
        <end position="451"/>
    </location>
</feature>
<feature type="turn" evidence="19">
    <location>
        <begin position="453"/>
        <end position="455"/>
    </location>
</feature>
<feature type="strand" evidence="19">
    <location>
        <begin position="458"/>
        <end position="460"/>
    </location>
</feature>
<feature type="helix" evidence="23">
    <location>
        <begin position="463"/>
        <end position="465"/>
    </location>
</feature>
<feature type="helix" evidence="19">
    <location>
        <begin position="477"/>
        <end position="479"/>
    </location>
</feature>
<feature type="helix" evidence="19">
    <location>
        <begin position="481"/>
        <end position="484"/>
    </location>
</feature>
<feature type="strand" evidence="19">
    <location>
        <begin position="486"/>
        <end position="491"/>
    </location>
</feature>
<feature type="helix" evidence="19">
    <location>
        <begin position="494"/>
        <end position="496"/>
    </location>
</feature>
<feature type="strand" evidence="19">
    <location>
        <begin position="498"/>
        <end position="500"/>
    </location>
</feature>
<feature type="strand" evidence="19">
    <location>
        <begin position="505"/>
        <end position="511"/>
    </location>
</feature>
<feature type="helix" evidence="19">
    <location>
        <begin position="514"/>
        <end position="519"/>
    </location>
</feature>
<feature type="helix" evidence="19">
    <location>
        <begin position="521"/>
        <end position="532"/>
    </location>
</feature>
<feature type="turn" evidence="19">
    <location>
        <begin position="533"/>
        <end position="535"/>
    </location>
</feature>
<feature type="strand" evidence="19">
    <location>
        <begin position="543"/>
        <end position="557"/>
    </location>
</feature>
<feature type="strand" evidence="19">
    <location>
        <begin position="562"/>
        <end position="564"/>
    </location>
</feature>
<feature type="strand" evidence="19">
    <location>
        <begin position="566"/>
        <end position="570"/>
    </location>
</feature>
<feature type="helix" evidence="22">
    <location>
        <begin position="573"/>
        <end position="575"/>
    </location>
</feature>
<feature type="strand" evidence="19">
    <location>
        <begin position="581"/>
        <end position="587"/>
    </location>
</feature>
<feature type="turn" evidence="19">
    <location>
        <begin position="588"/>
        <end position="591"/>
    </location>
</feature>
<feature type="helix" evidence="19">
    <location>
        <begin position="592"/>
        <end position="601"/>
    </location>
</feature>
<feature type="helix" evidence="19">
    <location>
        <begin position="602"/>
        <end position="604"/>
    </location>
</feature>
<feature type="turn" evidence="19">
    <location>
        <begin position="605"/>
        <end position="608"/>
    </location>
</feature>
<feature type="helix" evidence="19">
    <location>
        <begin position="616"/>
        <end position="627"/>
    </location>
</feature>
<feature type="turn" evidence="19">
    <location>
        <begin position="628"/>
        <end position="630"/>
    </location>
</feature>
<feature type="strand" evidence="19">
    <location>
        <begin position="632"/>
        <end position="638"/>
    </location>
</feature>
<feature type="strand" evidence="18">
    <location>
        <begin position="657"/>
        <end position="659"/>
    </location>
</feature>
<feature type="helix" evidence="19">
    <location>
        <begin position="672"/>
        <end position="682"/>
    </location>
</feature>
<feature type="strand" evidence="19">
    <location>
        <begin position="685"/>
        <end position="691"/>
    </location>
</feature>
<feature type="helix" evidence="19">
    <location>
        <begin position="699"/>
        <end position="702"/>
    </location>
</feature>
<feature type="helix" evidence="19">
    <location>
        <begin position="704"/>
        <end position="707"/>
    </location>
</feature>
<feature type="turn" evidence="19">
    <location>
        <begin position="708"/>
        <end position="710"/>
    </location>
</feature>
<feature type="strand" evidence="19">
    <location>
        <begin position="713"/>
        <end position="715"/>
    </location>
</feature>
<feature type="turn" evidence="19">
    <location>
        <begin position="721"/>
        <end position="723"/>
    </location>
</feature>
<feature type="helix" evidence="19">
    <location>
        <begin position="725"/>
        <end position="740"/>
    </location>
</feature>
<feature type="strand" evidence="19">
    <location>
        <begin position="744"/>
        <end position="753"/>
    </location>
</feature>
<feature type="strand" evidence="19">
    <location>
        <begin position="757"/>
        <end position="768"/>
    </location>
</feature>
<feature type="strand" evidence="24">
    <location>
        <begin position="770"/>
        <end position="772"/>
    </location>
</feature>
<feature type="strand" evidence="19">
    <location>
        <begin position="774"/>
        <end position="779"/>
    </location>
</feature>
<feature type="strand" evidence="19">
    <location>
        <begin position="785"/>
        <end position="793"/>
    </location>
</feature>
<feature type="strand" evidence="19">
    <location>
        <begin position="799"/>
        <end position="810"/>
    </location>
</feature>
<feature type="strand" evidence="19">
    <location>
        <begin position="816"/>
        <end position="828"/>
    </location>
</feature>
<feature type="helix" evidence="19">
    <location>
        <begin position="831"/>
        <end position="836"/>
    </location>
</feature>
<feature type="helix" evidence="19">
    <location>
        <begin position="840"/>
        <end position="857"/>
    </location>
</feature>
<feature type="helix" evidence="19">
    <location>
        <begin position="860"/>
        <end position="879"/>
    </location>
</feature>
<feature type="strand" evidence="19">
    <location>
        <begin position="891"/>
        <end position="893"/>
    </location>
</feature>
<feature type="helix" evidence="19">
    <location>
        <begin position="894"/>
        <end position="896"/>
    </location>
</feature>
<feature type="helix" evidence="19">
    <location>
        <begin position="899"/>
        <end position="908"/>
    </location>
</feature>
<feature type="turn" evidence="19">
    <location>
        <begin position="910"/>
        <end position="912"/>
    </location>
</feature>
<feature type="helix" evidence="19">
    <location>
        <begin position="920"/>
        <end position="932"/>
    </location>
</feature>
<feature type="helix" evidence="19">
    <location>
        <begin position="935"/>
        <end position="942"/>
    </location>
</feature>
<feature type="strand" evidence="19">
    <location>
        <begin position="945"/>
        <end position="948"/>
    </location>
</feature>
<feature type="strand" evidence="19">
    <location>
        <begin position="954"/>
        <end position="956"/>
    </location>
</feature>
<feature type="strand" evidence="20">
    <location>
        <begin position="960"/>
        <end position="962"/>
    </location>
</feature>
<feature type="turn" evidence="19">
    <location>
        <begin position="975"/>
        <end position="977"/>
    </location>
</feature>
<feature type="strand" evidence="19">
    <location>
        <begin position="982"/>
        <end position="987"/>
    </location>
</feature>
<feature type="strand" evidence="19">
    <location>
        <begin position="989"/>
        <end position="996"/>
    </location>
</feature>
<feature type="helix" evidence="19">
    <location>
        <begin position="1002"/>
        <end position="1007"/>
    </location>
</feature>
<feature type="helix" evidence="19">
    <location>
        <begin position="1014"/>
        <end position="1016"/>
    </location>
</feature>
<feature type="helix" evidence="19">
    <location>
        <begin position="1030"/>
        <end position="1043"/>
    </location>
</feature>
<feature type="strand" evidence="19">
    <location>
        <begin position="1046"/>
        <end position="1048"/>
    </location>
</feature>
<feature type="strand" evidence="19">
    <location>
        <begin position="1051"/>
        <end position="1053"/>
    </location>
</feature>
<feature type="strand" evidence="19">
    <location>
        <begin position="1058"/>
        <end position="1061"/>
    </location>
</feature>
<feature type="helix" evidence="19">
    <location>
        <begin position="1066"/>
        <end position="1068"/>
    </location>
</feature>
<feature type="strand" evidence="21">
    <location>
        <begin position="1075"/>
        <end position="1077"/>
    </location>
</feature>
<feature type="helix" evidence="19">
    <location>
        <begin position="1080"/>
        <end position="1091"/>
    </location>
</feature>
<organism>
    <name type="scientific">Homo sapiens</name>
    <name type="common">Human</name>
    <dbReference type="NCBI Taxonomy" id="9606"/>
    <lineage>
        <taxon>Eukaryota</taxon>
        <taxon>Metazoa</taxon>
        <taxon>Chordata</taxon>
        <taxon>Craniata</taxon>
        <taxon>Vertebrata</taxon>
        <taxon>Euteleostomi</taxon>
        <taxon>Mammalia</taxon>
        <taxon>Eutheria</taxon>
        <taxon>Euarchontoglires</taxon>
        <taxon>Primates</taxon>
        <taxon>Haplorrhini</taxon>
        <taxon>Catarrhini</taxon>
        <taxon>Hominidae</taxon>
        <taxon>Homo</taxon>
    </lineage>
</organism>
<proteinExistence type="evidence at protein level"/>
<comment type="function">
    <text evidence="4 5 6">Component of the coat protein complex II (COPII) which promotes the formation of transport vesicles from the endoplasmic reticulum (ER). The coat has two main functions, the physical deformation of the endoplasmic reticulum membrane into vesicles and the selection of cargo molecules for their transport to the Golgi complex (PubMed:17499046, PubMed:18843296, PubMed:20427317). Plays a central role in cargo selection within the COPII complex and together with SEC24B may have a different specificity compared to SEC24C and SEC24D. May package preferentially cargos with cytoplasmic DxE or LxxLE motifs and may also recognize conformational epitopes (PubMed:17499046, PubMed:18843296).</text>
</comment>
<comment type="subunit">
    <text evidence="4 6 7 8 9">COPII is composed of at least five proteins: the Sec23/24 complex, the Sec13/31 complex and Sar1 (PubMed:17499046). Interacts with TMED2 (PubMed:20427317). Interacts (as part of the Sec23/24 complex) with SEC22B; recruits SEC22B into COPII-coated vesicles for its transport from the endoplasmic reticulum to the Golgi (PubMed:17499046). Interacts with STING1; promoting STING1 translocation to COPII vesicles in a STEEP1-dependent manner (PubMed:32690950). Interacts with TMEM39A (PubMed:31806350). Interacts with SACM1L; this interaction is reduced in the absence of TMEM39A (PubMed:31806350). Interacts with kinase FAM20C; transport of FAM20C from the endoplasmic reticulum to the Golgi is likely to be mediated by COPII vesicles (PubMed:34349020).</text>
</comment>
<comment type="interaction">
    <interactant intactId="EBI-749911">
        <id>O95486</id>
    </interactant>
    <interactant intactId="EBI-739737">
        <id>Q01844</id>
        <label>EWSR1</label>
    </interactant>
    <organismsDiffer>false</organismsDiffer>
    <experiments>3</experiments>
</comment>
<comment type="interaction">
    <interactant intactId="EBI-749911">
        <id>O95486</id>
    </interactant>
    <interactant intactId="EBI-357061">
        <id>Q92734</id>
        <label>TFG</label>
    </interactant>
    <organismsDiffer>false</organismsDiffer>
    <experiments>3</experiments>
</comment>
<comment type="interaction">
    <interactant intactId="EBI-12320085">
        <id>O95486-2</id>
    </interactant>
    <interactant intactId="EBI-948603">
        <id>Q03989</id>
        <label>ARID5A</label>
    </interactant>
    <organismsDiffer>false</organismsDiffer>
    <experiments>3</experiments>
</comment>
<comment type="interaction">
    <interactant intactId="EBI-12320085">
        <id>O95486-2</id>
    </interactant>
    <interactant intactId="EBI-724639">
        <id>Q9UBV8</id>
        <label>PEF1</label>
    </interactant>
    <organismsDiffer>false</organismsDiffer>
    <experiments>3</experiments>
</comment>
<comment type="interaction">
    <interactant intactId="EBI-12320085">
        <id>O95486-2</id>
    </interactant>
    <interactant intactId="EBI-11975223">
        <id>Q70EL1-9</id>
        <label>USP54</label>
    </interactant>
    <organismsDiffer>false</organismsDiffer>
    <experiments>3</experiments>
</comment>
<comment type="subcellular location">
    <subcellularLocation>
        <location evidence="12">Cytoplasmic vesicle</location>
        <location evidence="12">COPII-coated vesicle membrane</location>
        <topology evidence="12">Peripheral membrane protein</topology>
        <orientation evidence="12">Cytoplasmic side</orientation>
    </subcellularLocation>
    <subcellularLocation>
        <location evidence="12">Endoplasmic reticulum membrane</location>
        <topology evidence="12">Peripheral membrane protein</topology>
        <orientation evidence="12">Cytoplasmic side</orientation>
    </subcellularLocation>
    <subcellularLocation>
        <location evidence="12">Cytoplasm</location>
        <location evidence="12">Cytosol</location>
    </subcellularLocation>
</comment>
<comment type="alternative products">
    <event type="alternative splicing"/>
    <isoform>
        <id>O95486-1</id>
        <name>1</name>
        <sequence type="displayed"/>
    </isoform>
    <isoform>
        <id>O95486-2</id>
        <name>2</name>
        <sequence type="described" ref="VSP_029571 VSP_029572"/>
    </isoform>
</comment>
<comment type="similarity">
    <text evidence="11">Belongs to the SEC23/SEC24 family. SEC24 subfamily.</text>
</comment>
<comment type="sequence caution" evidence="11">
    <conflict type="frameshift">
        <sequence resource="EMBL-CDS" id="CAA10334"/>
    </conflict>
</comment>
<comment type="online information" name="Wikipedia">
    <link uri="https://en.wikipedia.org/wiki/COPII"/>
    <text>COPII entry</text>
</comment>
<gene>
    <name evidence="13" type="primary">SEC24A</name>
</gene>
<name>SC24A_HUMAN</name>
<sequence length="1093" mass="119749">MSQPGIPASGGAPASLQAQNGAALASGSPYTNGPVQNALLSSQESVSQGYNFQLPGSYPHPIPAKTLNPVSGQSNYGGSQGSGQTLNRPPVASNPVTPSLHSGPAPRMPLPASQNPATTPMPSSSFLPEANLPPPLNWQYNYPSTASQTNHCPRASSQPTVSGNTSLTTNHQYVSSGYPSLQNSFIKSGPSVPPLVNPPLPTTFQPGAPHGPPPAGGPPPVRALTPLTSSYRDVPQPLFNSAVNQEGITSNTNNGSMVVHSSYDEIEGGGLLATPQLTNKNPKMSRSVGYSYPSLPPGYQNTTPPGATGVPPSSLNYPSGPQAFTQTPLGANHLTTSMSGLSLQPEGLRVVNLLQERNMLPSTPLKPPVPNLHEDIQKLNCNPELFRCTLTSIPQTQALLNKAKLPLGLLLHPFKDLVQLPVVTSSTIVRCRSCRTYINPFVSFLDQRRWKCNLCYRVNDVPEEFLYNPLTRVYGEPHRRPEVQNATIEFMAPSEYMLRPPQPPVYLFVFDVSHNAVETGYLNSVCQSLLDNLDLLPGNTRTKIGFITFDSTIHFYGLQESLSQPQMLIVSDIEDVFIPMPENLLVNLNESKELVQDLLKTLPQMFTKTLETQSALGPALQAAFKLMSPTGGRMSVFQTQLPTLGVGALKPREEPNHRSSAKDIHMTPSTDFYKKLALDCSGQQVAVDLFLLSGQYSDLASLGCISRYSAGSVYYYPSYHHQHNPVQVQKLQKELQRYLTRKIGFEAVMRIRCTKGLSIHTFHGNFFVRSTDLLSLPNVNPDAGYAVQMSVEESLTDTQLVSFQSALLYTSSKGERRIRVHTLCLPVVSTLNDVFLGADVQAISGLLANMAVDRSMTASLSDARDALVNAVIDSLSAYRSSVLSNQQPGLMVPFSLRLFPLFVLALLKQKSFQTGTNARLDERIFAMCQVKNQPLVYLMLTTHPSLYRVDNLSDEGALNISDRTIPQPPILQLSVEKLSRDGAFLMDAGSVLMLWVGKNCTQNFLSQVLGVQNYASIPQPMTDLPELDTPESARIIAFISWLREQRPFFPILYVIRDESPMKANFLQNMIEDRTESALSYYEFLLHIQQQVNK</sequence>
<dbReference type="EMBL" id="CH471062">
    <property type="protein sequence ID" value="EAW62246.1"/>
    <property type="molecule type" value="Genomic_DNA"/>
</dbReference>
<dbReference type="EMBL" id="BC009325">
    <property type="protein sequence ID" value="AAH09325.2"/>
    <property type="molecule type" value="mRNA"/>
</dbReference>
<dbReference type="EMBL" id="BC019341">
    <property type="protein sequence ID" value="AAH19341.1"/>
    <property type="molecule type" value="mRNA"/>
</dbReference>
<dbReference type="EMBL" id="AJ131244">
    <property type="protein sequence ID" value="CAA10334.1"/>
    <property type="status" value="ALT_FRAME"/>
    <property type="molecule type" value="mRNA"/>
</dbReference>
<dbReference type="CCDS" id="CCDS43363.1">
    <molecule id="O95486-1"/>
</dbReference>
<dbReference type="CCDS" id="CCDS58967.1">
    <molecule id="O95486-2"/>
</dbReference>
<dbReference type="RefSeq" id="NP_001239160.1">
    <molecule id="O95486-2"/>
    <property type="nucleotide sequence ID" value="NM_001252231.2"/>
</dbReference>
<dbReference type="RefSeq" id="NP_068817.1">
    <molecule id="O95486-1"/>
    <property type="nucleotide sequence ID" value="NM_021982.3"/>
</dbReference>
<dbReference type="PDB" id="2NUP">
    <property type="method" value="X-ray"/>
    <property type="resolution" value="2.80 A"/>
    <property type="chains" value="B=341-1093"/>
</dbReference>
<dbReference type="PDB" id="2NUT">
    <property type="method" value="X-ray"/>
    <property type="resolution" value="2.30 A"/>
    <property type="chains" value="B=341-1093"/>
</dbReference>
<dbReference type="PDB" id="3EGD">
    <property type="method" value="X-ray"/>
    <property type="resolution" value="2.70 A"/>
    <property type="chains" value="B=346-1093"/>
</dbReference>
<dbReference type="PDB" id="3EGX">
    <property type="method" value="X-ray"/>
    <property type="resolution" value="3.30 A"/>
    <property type="chains" value="B=346-1093"/>
</dbReference>
<dbReference type="PDB" id="5VNE">
    <property type="method" value="X-ray"/>
    <property type="resolution" value="2.70 A"/>
    <property type="chains" value="B=346-1093"/>
</dbReference>
<dbReference type="PDB" id="5VNF">
    <property type="method" value="X-ray"/>
    <property type="resolution" value="2.41 A"/>
    <property type="chains" value="B=346-1093"/>
</dbReference>
<dbReference type="PDB" id="5VNG">
    <property type="method" value="X-ray"/>
    <property type="resolution" value="2.60 A"/>
    <property type="chains" value="B=346-1093"/>
</dbReference>
<dbReference type="PDB" id="5VNH">
    <property type="method" value="X-ray"/>
    <property type="resolution" value="2.60 A"/>
    <property type="chains" value="B=346-1093"/>
</dbReference>
<dbReference type="PDB" id="5VNI">
    <property type="method" value="X-ray"/>
    <property type="resolution" value="2.79 A"/>
    <property type="chains" value="B=346-1093"/>
</dbReference>
<dbReference type="PDB" id="5VNJ">
    <property type="method" value="X-ray"/>
    <property type="resolution" value="2.81 A"/>
    <property type="chains" value="B=346-1093"/>
</dbReference>
<dbReference type="PDB" id="5VNK">
    <property type="method" value="X-ray"/>
    <property type="resolution" value="2.55 A"/>
    <property type="chains" value="B=346-1093"/>
</dbReference>
<dbReference type="PDB" id="5VNL">
    <property type="method" value="X-ray"/>
    <property type="resolution" value="2.39 A"/>
    <property type="chains" value="B=346-1093"/>
</dbReference>
<dbReference type="PDB" id="5VNM">
    <property type="method" value="X-ray"/>
    <property type="resolution" value="2.77 A"/>
    <property type="chains" value="B=346-1093"/>
</dbReference>
<dbReference type="PDB" id="5VNN">
    <property type="method" value="X-ray"/>
    <property type="resolution" value="2.50 A"/>
    <property type="chains" value="B=346-1093"/>
</dbReference>
<dbReference type="PDB" id="5VNO">
    <property type="method" value="X-ray"/>
    <property type="resolution" value="2.90 A"/>
    <property type="chains" value="B=346-1093"/>
</dbReference>
<dbReference type="PDB" id="8HR0">
    <property type="method" value="X-ray"/>
    <property type="resolution" value="3.34 A"/>
    <property type="chains" value="B=343-1093"/>
</dbReference>
<dbReference type="PDBsum" id="2NUP"/>
<dbReference type="PDBsum" id="2NUT"/>
<dbReference type="PDBsum" id="3EGD"/>
<dbReference type="PDBsum" id="3EGX"/>
<dbReference type="PDBsum" id="5VNE"/>
<dbReference type="PDBsum" id="5VNF"/>
<dbReference type="PDBsum" id="5VNG"/>
<dbReference type="PDBsum" id="5VNH"/>
<dbReference type="PDBsum" id="5VNI"/>
<dbReference type="PDBsum" id="5VNJ"/>
<dbReference type="PDBsum" id="5VNK"/>
<dbReference type="PDBsum" id="5VNL"/>
<dbReference type="PDBsum" id="5VNM"/>
<dbReference type="PDBsum" id="5VNN"/>
<dbReference type="PDBsum" id="5VNO"/>
<dbReference type="PDBsum" id="8HR0"/>
<dbReference type="SMR" id="O95486"/>
<dbReference type="BioGRID" id="116016">
    <property type="interactions" value="227"/>
</dbReference>
<dbReference type="ComplexPortal" id="CPX-2360">
    <property type="entry name" value="COPII vesicle coat complex"/>
</dbReference>
<dbReference type="FunCoup" id="O95486">
    <property type="interactions" value="2791"/>
</dbReference>
<dbReference type="IntAct" id="O95486">
    <property type="interactions" value="71"/>
</dbReference>
<dbReference type="MINT" id="O95486"/>
<dbReference type="STRING" id="9606.ENSP00000381823"/>
<dbReference type="GlyCosmos" id="O95486">
    <property type="glycosylation" value="6 sites, 1 glycan"/>
</dbReference>
<dbReference type="GlyGen" id="O95486">
    <property type="glycosylation" value="12 sites, 1 O-linked glycan (11 sites)"/>
</dbReference>
<dbReference type="iPTMnet" id="O95486"/>
<dbReference type="MetOSite" id="O95486"/>
<dbReference type="PhosphoSitePlus" id="O95486"/>
<dbReference type="BioMuta" id="SEC24A"/>
<dbReference type="jPOST" id="O95486"/>
<dbReference type="MassIVE" id="O95486"/>
<dbReference type="PaxDb" id="9606-ENSP00000381823"/>
<dbReference type="PeptideAtlas" id="O95486"/>
<dbReference type="ProteomicsDB" id="50913">
    <molecule id="O95486-1"/>
</dbReference>
<dbReference type="ProteomicsDB" id="50914">
    <molecule id="O95486-2"/>
</dbReference>
<dbReference type="Pumba" id="O95486"/>
<dbReference type="Antibodypedia" id="45232">
    <property type="antibodies" value="106 antibodies from 24 providers"/>
</dbReference>
<dbReference type="DNASU" id="10802"/>
<dbReference type="Ensembl" id="ENST00000322887.8">
    <molecule id="O95486-2"/>
    <property type="protein sequence ID" value="ENSP00000321749.4"/>
    <property type="gene ID" value="ENSG00000113615.13"/>
</dbReference>
<dbReference type="Ensembl" id="ENST00000398844.7">
    <molecule id="O95486-1"/>
    <property type="protein sequence ID" value="ENSP00000381823.2"/>
    <property type="gene ID" value="ENSG00000113615.13"/>
</dbReference>
<dbReference type="GeneID" id="10802"/>
<dbReference type="KEGG" id="hsa:10802"/>
<dbReference type="MANE-Select" id="ENST00000398844.7">
    <property type="protein sequence ID" value="ENSP00000381823.2"/>
    <property type="RefSeq nucleotide sequence ID" value="NM_021982.3"/>
    <property type="RefSeq protein sequence ID" value="NP_068817.1"/>
</dbReference>
<dbReference type="UCSC" id="uc003kzs.4">
    <molecule id="O95486-1"/>
    <property type="organism name" value="human"/>
</dbReference>
<dbReference type="AGR" id="HGNC:10703"/>
<dbReference type="CTD" id="10802"/>
<dbReference type="GeneCards" id="SEC24A"/>
<dbReference type="HGNC" id="HGNC:10703">
    <property type="gene designation" value="SEC24A"/>
</dbReference>
<dbReference type="HPA" id="ENSG00000113615">
    <property type="expression patterns" value="Low tissue specificity"/>
</dbReference>
<dbReference type="MIM" id="607183">
    <property type="type" value="gene"/>
</dbReference>
<dbReference type="neXtProt" id="NX_O95486"/>
<dbReference type="OpenTargets" id="ENSG00000113615"/>
<dbReference type="PharmGKB" id="PA35626"/>
<dbReference type="VEuPathDB" id="HostDB:ENSG00000113615"/>
<dbReference type="eggNOG" id="KOG1985">
    <property type="taxonomic scope" value="Eukaryota"/>
</dbReference>
<dbReference type="GeneTree" id="ENSGT00950000182924"/>
<dbReference type="HOGENOM" id="CLU_004589_2_0_1"/>
<dbReference type="InParanoid" id="O95486"/>
<dbReference type="OMA" id="AVECSKQ"/>
<dbReference type="OrthoDB" id="49016at2759"/>
<dbReference type="PAN-GO" id="O95486">
    <property type="GO annotations" value="5 GO annotations based on evolutionary models"/>
</dbReference>
<dbReference type="PhylomeDB" id="O95486"/>
<dbReference type="TreeFam" id="TF350406"/>
<dbReference type="PathwayCommons" id="O95486"/>
<dbReference type="Reactome" id="R-HSA-1655829">
    <property type="pathway name" value="Regulation of cholesterol biosynthesis by SREBP (SREBF)"/>
</dbReference>
<dbReference type="Reactome" id="R-HSA-204005">
    <property type="pathway name" value="COPII-mediated vesicle transport"/>
</dbReference>
<dbReference type="Reactome" id="R-HSA-2132295">
    <property type="pathway name" value="MHC class II antigen presentation"/>
</dbReference>
<dbReference type="Reactome" id="R-HSA-5694530">
    <property type="pathway name" value="Cargo concentration in the ER"/>
</dbReference>
<dbReference type="Reactome" id="R-HSA-9705671">
    <property type="pathway name" value="SARS-CoV-2 activates/modulates innate and adaptive immune responses"/>
</dbReference>
<dbReference type="Reactome" id="R-HSA-983170">
    <property type="pathway name" value="Antigen Presentation: Folding, assembly and peptide loading of class I MHC"/>
</dbReference>
<dbReference type="SignaLink" id="O95486"/>
<dbReference type="SIGNOR" id="O95486"/>
<dbReference type="BioGRID-ORCS" id="10802">
    <property type="hits" value="19 hits in 1146 CRISPR screens"/>
</dbReference>
<dbReference type="ChiTaRS" id="SEC24A">
    <property type="organism name" value="human"/>
</dbReference>
<dbReference type="EvolutionaryTrace" id="O95486"/>
<dbReference type="GenomeRNAi" id="10802"/>
<dbReference type="Pharos" id="O95486">
    <property type="development level" value="Tbio"/>
</dbReference>
<dbReference type="PRO" id="PR:O95486"/>
<dbReference type="Proteomes" id="UP000005640">
    <property type="component" value="Chromosome 5"/>
</dbReference>
<dbReference type="RNAct" id="O95486">
    <property type="molecule type" value="protein"/>
</dbReference>
<dbReference type="Bgee" id="ENSG00000113615">
    <property type="expression patterns" value="Expressed in jejunal mucosa and 207 other cell types or tissues"/>
</dbReference>
<dbReference type="ExpressionAtlas" id="O95486">
    <property type="expression patterns" value="baseline and differential"/>
</dbReference>
<dbReference type="GO" id="GO:0030127">
    <property type="term" value="C:COPII vesicle coat"/>
    <property type="evidence" value="ECO:0000314"/>
    <property type="project" value="UniProtKB"/>
</dbReference>
<dbReference type="GO" id="GO:0005829">
    <property type="term" value="C:cytosol"/>
    <property type="evidence" value="ECO:0000304"/>
    <property type="project" value="Reactome"/>
</dbReference>
<dbReference type="GO" id="GO:0070971">
    <property type="term" value="C:endoplasmic reticulum exit site"/>
    <property type="evidence" value="ECO:0000318"/>
    <property type="project" value="GO_Central"/>
</dbReference>
<dbReference type="GO" id="GO:0005789">
    <property type="term" value="C:endoplasmic reticulum membrane"/>
    <property type="evidence" value="ECO:0000304"/>
    <property type="project" value="Reactome"/>
</dbReference>
<dbReference type="GO" id="GO:0012507">
    <property type="term" value="C:ER to Golgi transport vesicle membrane"/>
    <property type="evidence" value="ECO:0000304"/>
    <property type="project" value="Reactome"/>
</dbReference>
<dbReference type="GO" id="GO:0000149">
    <property type="term" value="F:SNARE binding"/>
    <property type="evidence" value="ECO:0000318"/>
    <property type="project" value="GO_Central"/>
</dbReference>
<dbReference type="GO" id="GO:0008270">
    <property type="term" value="F:zinc ion binding"/>
    <property type="evidence" value="ECO:0000314"/>
    <property type="project" value="UniProtKB"/>
</dbReference>
<dbReference type="GO" id="GO:0042632">
    <property type="term" value="P:cholesterol homeostasis"/>
    <property type="evidence" value="ECO:0007669"/>
    <property type="project" value="Ensembl"/>
</dbReference>
<dbReference type="GO" id="GO:0090110">
    <property type="term" value="P:COPII-coated vesicle cargo loading"/>
    <property type="evidence" value="ECO:0000314"/>
    <property type="project" value="UniProtKB"/>
</dbReference>
<dbReference type="GO" id="GO:0006888">
    <property type="term" value="P:endoplasmic reticulum to Golgi vesicle-mediated transport"/>
    <property type="evidence" value="ECO:0000315"/>
    <property type="project" value="UniProtKB"/>
</dbReference>
<dbReference type="GO" id="GO:0006886">
    <property type="term" value="P:intracellular protein transport"/>
    <property type="evidence" value="ECO:0007669"/>
    <property type="project" value="InterPro"/>
</dbReference>
<dbReference type="GO" id="GO:0050714">
    <property type="term" value="P:positive regulation of protein secretion"/>
    <property type="evidence" value="ECO:0007669"/>
    <property type="project" value="Ensembl"/>
</dbReference>
<dbReference type="GO" id="GO:0032374">
    <property type="term" value="P:regulation of cholesterol transport"/>
    <property type="evidence" value="ECO:0007669"/>
    <property type="project" value="Ensembl"/>
</dbReference>
<dbReference type="CDD" id="cd01479">
    <property type="entry name" value="Sec24-like"/>
    <property type="match status" value="1"/>
</dbReference>
<dbReference type="FunFam" id="2.30.30.380:FF:000004">
    <property type="entry name" value="SEC24 homolog B, COPII coat complex component"/>
    <property type="match status" value="1"/>
</dbReference>
<dbReference type="FunFam" id="3.40.20.10:FF:000029">
    <property type="entry name" value="SEC24 homolog B, COPII coat complex component"/>
    <property type="match status" value="1"/>
</dbReference>
<dbReference type="FunFam" id="3.40.50.410:FF:000019">
    <property type="entry name" value="SEC24 homolog B, COPII coat complex component"/>
    <property type="match status" value="1"/>
</dbReference>
<dbReference type="Gene3D" id="2.60.40.1670">
    <property type="entry name" value="beta-sandwich domain of Sec23/24"/>
    <property type="match status" value="1"/>
</dbReference>
<dbReference type="Gene3D" id="1.20.120.730">
    <property type="entry name" value="Sec23/Sec24 helical domain"/>
    <property type="match status" value="1"/>
</dbReference>
<dbReference type="Gene3D" id="3.40.20.10">
    <property type="entry name" value="Severin"/>
    <property type="match status" value="1"/>
</dbReference>
<dbReference type="Gene3D" id="3.40.50.410">
    <property type="entry name" value="von Willebrand factor, type A domain"/>
    <property type="match status" value="1"/>
</dbReference>
<dbReference type="Gene3D" id="2.30.30.380">
    <property type="entry name" value="Zn-finger domain of Sec23/24"/>
    <property type="match status" value="1"/>
</dbReference>
<dbReference type="InterPro" id="IPR029006">
    <property type="entry name" value="ADF-H/Gelsolin-like_dom_sf"/>
</dbReference>
<dbReference type="InterPro" id="IPR007123">
    <property type="entry name" value="Gelsolin-like_dom"/>
</dbReference>
<dbReference type="InterPro" id="IPR036180">
    <property type="entry name" value="Gelsolin-like_dom_sf"/>
</dbReference>
<dbReference type="InterPro" id="IPR006900">
    <property type="entry name" value="Sec23/24_helical_dom"/>
</dbReference>
<dbReference type="InterPro" id="IPR036175">
    <property type="entry name" value="Sec23/24_helical_dom_sf"/>
</dbReference>
<dbReference type="InterPro" id="IPR006896">
    <property type="entry name" value="Sec23/24_trunk_dom"/>
</dbReference>
<dbReference type="InterPro" id="IPR012990">
    <property type="entry name" value="Sec23_24_beta_S"/>
</dbReference>
<dbReference type="InterPro" id="IPR050550">
    <property type="entry name" value="SEC23_SEC24_subfamily"/>
</dbReference>
<dbReference type="InterPro" id="IPR041742">
    <property type="entry name" value="Sec24-like_trunk_dom"/>
</dbReference>
<dbReference type="InterPro" id="IPR036465">
    <property type="entry name" value="vWFA_dom_sf"/>
</dbReference>
<dbReference type="InterPro" id="IPR006895">
    <property type="entry name" value="Znf_Sec23_Sec24"/>
</dbReference>
<dbReference type="PANTHER" id="PTHR13803:SF1">
    <property type="entry name" value="PROTEIN TRANSPORT PROTEIN SEC24A"/>
    <property type="match status" value="1"/>
</dbReference>
<dbReference type="PANTHER" id="PTHR13803">
    <property type="entry name" value="SEC24-RELATED PROTEIN"/>
    <property type="match status" value="1"/>
</dbReference>
<dbReference type="Pfam" id="PF00626">
    <property type="entry name" value="Gelsolin"/>
    <property type="match status" value="1"/>
</dbReference>
<dbReference type="Pfam" id="PF08033">
    <property type="entry name" value="Sec23_BS"/>
    <property type="match status" value="1"/>
</dbReference>
<dbReference type="Pfam" id="PF04815">
    <property type="entry name" value="Sec23_helical"/>
    <property type="match status" value="1"/>
</dbReference>
<dbReference type="Pfam" id="PF04811">
    <property type="entry name" value="Sec23_trunk"/>
    <property type="match status" value="1"/>
</dbReference>
<dbReference type="Pfam" id="PF04810">
    <property type="entry name" value="zf-Sec23_Sec24"/>
    <property type="match status" value="1"/>
</dbReference>
<dbReference type="SUPFAM" id="SSF81995">
    <property type="entry name" value="beta-sandwich domain of Sec23/24"/>
    <property type="match status" value="2"/>
</dbReference>
<dbReference type="SUPFAM" id="SSF82754">
    <property type="entry name" value="C-terminal, gelsolin-like domain of Sec23/24"/>
    <property type="match status" value="1"/>
</dbReference>
<dbReference type="SUPFAM" id="SSF81811">
    <property type="entry name" value="Helical domain of Sec23/24"/>
    <property type="match status" value="1"/>
</dbReference>
<dbReference type="SUPFAM" id="SSF53300">
    <property type="entry name" value="vWA-like"/>
    <property type="match status" value="1"/>
</dbReference>
<reference key="1">
    <citation type="submission" date="2005-07" db="EMBL/GenBank/DDBJ databases">
        <authorList>
            <person name="Mural R.J."/>
            <person name="Istrail S."/>
            <person name="Sutton G.G."/>
            <person name="Florea L."/>
            <person name="Halpern A.L."/>
            <person name="Mobarry C.M."/>
            <person name="Lippert R."/>
            <person name="Walenz B."/>
            <person name="Shatkay H."/>
            <person name="Dew I."/>
            <person name="Miller J.R."/>
            <person name="Flanigan M.J."/>
            <person name="Edwards N.J."/>
            <person name="Bolanos R."/>
            <person name="Fasulo D."/>
            <person name="Halldorsson B.V."/>
            <person name="Hannenhalli S."/>
            <person name="Turner R."/>
            <person name="Yooseph S."/>
            <person name="Lu F."/>
            <person name="Nusskern D.R."/>
            <person name="Shue B.C."/>
            <person name="Zheng X.H."/>
            <person name="Zhong F."/>
            <person name="Delcher A.L."/>
            <person name="Huson D.H."/>
            <person name="Kravitz S.A."/>
            <person name="Mouchard L."/>
            <person name="Reinert K."/>
            <person name="Remington K.A."/>
            <person name="Clark A.G."/>
            <person name="Waterman M.S."/>
            <person name="Eichler E.E."/>
            <person name="Adams M.D."/>
            <person name="Hunkapiller M.W."/>
            <person name="Myers E.W."/>
            <person name="Venter J.C."/>
        </authorList>
    </citation>
    <scope>NUCLEOTIDE SEQUENCE [LARGE SCALE GENOMIC DNA]</scope>
</reference>
<reference key="2">
    <citation type="journal article" date="2004" name="Genome Res.">
        <title>The status, quality, and expansion of the NIH full-length cDNA project: the Mammalian Gene Collection (MGC).</title>
        <authorList>
            <consortium name="The MGC Project Team"/>
        </authorList>
    </citation>
    <scope>NUCLEOTIDE SEQUENCE [LARGE SCALE MRNA] (ISOFORM 2)</scope>
    <scope>NUCLEOTIDE SEQUENCE [LARGE SCALE MRNA] OF 690-1093 (ISOFORM 1)</scope>
    <scope>VARIANTS ILE-302 AND MET-396</scope>
    <source>
        <tissue>Brain</tissue>
        <tissue>Eye</tissue>
    </source>
</reference>
<reference key="3">
    <citation type="journal article" date="1999" name="J. Biol. Chem.">
        <title>Sec24 proteins and sorting at the endoplasmic reticulum.</title>
        <authorList>
            <person name="Pagano A."/>
            <person name="Letourneur F."/>
            <person name="Garcia-Estefania D."/>
            <person name="Carpentier J.-L."/>
            <person name="Orci L."/>
            <person name="Paccaud J.-P."/>
        </authorList>
    </citation>
    <scope>NUCLEOTIDE SEQUENCE [MRNA] OF 16-1093 (ISOFORM 1)</scope>
    <source>
        <tissue>B-cell</tissue>
    </source>
</reference>
<reference key="4">
    <citation type="journal article" date="2010" name="J. Cell Sci.">
        <title>Selective export of human GPI-anchored proteins from the endoplasmic reticulum.</title>
        <authorList>
            <person name="Bonnon C."/>
            <person name="Wendeler M.W."/>
            <person name="Paccaud J.P."/>
            <person name="Hauri H.P."/>
        </authorList>
    </citation>
    <scope>FUNCTION</scope>
    <scope>INTERACTION WITH TMED2</scope>
</reference>
<reference key="5">
    <citation type="journal article" date="2011" name="BMC Syst. Biol.">
        <title>Initial characterization of the human central proteome.</title>
        <authorList>
            <person name="Burkard T.R."/>
            <person name="Planyavsky M."/>
            <person name="Kaupe I."/>
            <person name="Breitwieser F.P."/>
            <person name="Buerckstuemmer T."/>
            <person name="Bennett K.L."/>
            <person name="Superti-Furga G."/>
            <person name="Colinge J."/>
        </authorList>
    </citation>
    <scope>IDENTIFICATION BY MASS SPECTROMETRY [LARGE SCALE ANALYSIS]</scope>
</reference>
<reference key="6">
    <citation type="journal article" date="2014" name="J. Proteomics">
        <title>An enzyme assisted RP-RPLC approach for in-depth analysis of human liver phosphoproteome.</title>
        <authorList>
            <person name="Bian Y."/>
            <person name="Song C."/>
            <person name="Cheng K."/>
            <person name="Dong M."/>
            <person name="Wang F."/>
            <person name="Huang J."/>
            <person name="Sun D."/>
            <person name="Wang L."/>
            <person name="Ye M."/>
            <person name="Zou H."/>
        </authorList>
    </citation>
    <scope>IDENTIFICATION BY MASS SPECTROMETRY [LARGE SCALE ANALYSIS]</scope>
    <source>
        <tissue>Liver</tissue>
    </source>
</reference>
<reference key="7">
    <citation type="journal article" date="2019" name="Mol. Cell">
        <title>The ER-Localized Transmembrane Protein TMEM39A/SUSR2 Regulates Autophagy by Controlling the Trafficking of the PtdIns(4)P Phosphatase SAC1.</title>
        <authorList>
            <person name="Miao G."/>
            <person name="Zhang Y."/>
            <person name="Chen D."/>
            <person name="Zhang H."/>
        </authorList>
    </citation>
    <scope>INTERACTION WITH TMEM39A AND SACM1L</scope>
</reference>
<reference key="8">
    <citation type="journal article" date="2021" name="Proc. Natl. Acad. Sci. U.S.A.">
        <title>Proteolytic processing of secretory pathway kinase Fam20C by site-1 protease promotes biomineralization.</title>
        <authorList>
            <person name="Chen X."/>
            <person name="Zhang J."/>
            <person name="Liu P."/>
            <person name="Wei Y."/>
            <person name="Wang X."/>
            <person name="Xiao J."/>
            <person name="Wang C.C."/>
            <person name="Wang L."/>
        </authorList>
    </citation>
    <scope>INTERACTION WITH FAM20C</scope>
</reference>
<reference evidence="14 15" key="9">
    <citation type="journal article" date="2007" name="Mol. Cell">
        <title>The transport signal on Sec22 for packaging into COPII-coated vesicles is a conformational epitope.</title>
        <authorList>
            <person name="Mancias J.D."/>
            <person name="Goldberg J."/>
        </authorList>
    </citation>
    <scope>X-RAY CRYSTALLOGRAPHY (2.30 ANGSTROMS) OF 341-1093 IN COMPLEX WITH ZINC; SEC23A AND SEC22B</scope>
    <scope>FUNCTION</scope>
    <scope>INTERACTION WITH SEC22B</scope>
    <scope>SUBUNIT</scope>
    <scope>SUBCELLULAR LOCATION</scope>
    <scope>MUTAGENESIS OF ARG-541</scope>
</reference>
<reference evidence="16 17" key="10">
    <citation type="journal article" date="2008" name="EMBO J.">
        <title>Structural basis of cargo membrane protein discrimination by the human COPII coat machinery.</title>
        <authorList>
            <person name="Mancias J.D."/>
            <person name="Goldberg J."/>
        </authorList>
    </citation>
    <scope>X-RAY CRYSTALLOGRAPHY (2.70 ANGSTROMS) OF 346-1093 IN COMPLEX WITH CARGO PEPTIDES; SEC22B; SEC23A AND ZINC</scope>
    <scope>FUNCTION</scope>
</reference>
<reference key="11">
    <citation type="journal article" date="2020" name="Nat. Immunol.">
        <title>STEEP mediates STING ER exit and activation of signaling.</title>
        <authorList>
            <person name="Zhang B.C."/>
            <person name="Nandakumar R."/>
            <person name="Reinert L.S."/>
            <person name="Huang J."/>
            <person name="Laustsen A."/>
            <person name="Gao Z.L."/>
            <person name="Sun C.L."/>
            <person name="Jensen S.B."/>
            <person name="Troldborg A."/>
            <person name="Assil S."/>
            <person name="Berthelsen M.F."/>
            <person name="Scavenius C."/>
            <person name="Zhang Y."/>
            <person name="Windross S.J."/>
            <person name="Olagnier D."/>
            <person name="Prabakaran T."/>
            <person name="Bodda C."/>
            <person name="Narita R."/>
            <person name="Cai Y."/>
            <person name="Zhang C.G."/>
            <person name="Stenmark H."/>
            <person name="Doucet C.M."/>
            <person name="Noda T."/>
            <person name="Guo Z."/>
            <person name="Goldbach-Mansky R."/>
            <person name="Hartmann R."/>
            <person name="Chen Z.J."/>
            <person name="Enghild J.J."/>
            <person name="Bak R.O."/>
            <person name="Thomsen M.K."/>
            <person name="Paludan S.R."/>
        </authorList>
    </citation>
    <scope>INTERACTION WITH STING1</scope>
</reference>
<reference key="12">
    <citation type="journal article" date="2020" name="Nat. Immunol.">
        <authorList>
            <person name="Zhang B.C."/>
            <person name="Nandakumar R."/>
            <person name="Reinert L.S."/>
            <person name="Huang J."/>
            <person name="Laustsen A."/>
            <person name="Gao Z.L."/>
            <person name="Sun C.L."/>
            <person name="Jensen S.B."/>
            <person name="Troldborg A."/>
            <person name="Assil S."/>
            <person name="Berthelsen M.F."/>
            <person name="Scavenius C."/>
            <person name="Zhang Y."/>
            <person name="Windross S.J."/>
            <person name="Olagnier D."/>
            <person name="Prabakaran T."/>
            <person name="Bodda C."/>
            <person name="Narita R."/>
            <person name="Cai Y."/>
            <person name="Zhang C.G."/>
            <person name="Stenmark H."/>
            <person name="Doucet C.M."/>
            <person name="Noda T."/>
            <person name="Guo Z."/>
            <person name="Goldbach-Mansky R."/>
            <person name="Hartmann R."/>
            <person name="Chen Z.J."/>
            <person name="Enghild J.J."/>
            <person name="Bak R.O."/>
            <person name="Thomsen M.K."/>
            <person name="Paludan S.R."/>
        </authorList>
    </citation>
    <scope>ERRATUM OF PUBMED:32690950</scope>
</reference>
<evidence type="ECO:0000255" key="1"/>
<evidence type="ECO:0000256" key="2">
    <source>
        <dbReference type="SAM" id="MobiDB-lite"/>
    </source>
</evidence>
<evidence type="ECO:0000269" key="3">
    <source>
    </source>
</evidence>
<evidence type="ECO:0000269" key="4">
    <source>
    </source>
</evidence>
<evidence type="ECO:0000269" key="5">
    <source>
    </source>
</evidence>
<evidence type="ECO:0000269" key="6">
    <source>
    </source>
</evidence>
<evidence type="ECO:0000269" key="7">
    <source>
    </source>
</evidence>
<evidence type="ECO:0000269" key="8">
    <source>
    </source>
</evidence>
<evidence type="ECO:0000269" key="9">
    <source>
    </source>
</evidence>
<evidence type="ECO:0000303" key="10">
    <source>
    </source>
</evidence>
<evidence type="ECO:0000305" key="11"/>
<evidence type="ECO:0000305" key="12">
    <source>
    </source>
</evidence>
<evidence type="ECO:0000312" key="13">
    <source>
        <dbReference type="HGNC" id="HGNC:10703"/>
    </source>
</evidence>
<evidence type="ECO:0007744" key="14">
    <source>
        <dbReference type="PDB" id="2NUP"/>
    </source>
</evidence>
<evidence type="ECO:0007744" key="15">
    <source>
        <dbReference type="PDB" id="2NUT"/>
    </source>
</evidence>
<evidence type="ECO:0007744" key="16">
    <source>
        <dbReference type="PDB" id="3EGD"/>
    </source>
</evidence>
<evidence type="ECO:0007744" key="17">
    <source>
        <dbReference type="PDB" id="3EGX"/>
    </source>
</evidence>
<evidence type="ECO:0007829" key="18">
    <source>
        <dbReference type="PDB" id="2NUP"/>
    </source>
</evidence>
<evidence type="ECO:0007829" key="19">
    <source>
        <dbReference type="PDB" id="2NUT"/>
    </source>
</evidence>
<evidence type="ECO:0007829" key="20">
    <source>
        <dbReference type="PDB" id="5VNE"/>
    </source>
</evidence>
<evidence type="ECO:0007829" key="21">
    <source>
        <dbReference type="PDB" id="5VNH"/>
    </source>
</evidence>
<evidence type="ECO:0007829" key="22">
    <source>
        <dbReference type="PDB" id="5VNI"/>
    </source>
</evidence>
<evidence type="ECO:0007829" key="23">
    <source>
        <dbReference type="PDB" id="5VNJ"/>
    </source>
</evidence>
<evidence type="ECO:0007829" key="24">
    <source>
        <dbReference type="PDB" id="5VNL"/>
    </source>
</evidence>
<keyword id="KW-0002">3D-structure</keyword>
<keyword id="KW-0025">Alternative splicing</keyword>
<keyword id="KW-0963">Cytoplasm</keyword>
<keyword id="KW-0968">Cytoplasmic vesicle</keyword>
<keyword id="KW-0256">Endoplasmic reticulum</keyword>
<keyword id="KW-0931">ER-Golgi transport</keyword>
<keyword id="KW-0472">Membrane</keyword>
<keyword id="KW-0479">Metal-binding</keyword>
<keyword id="KW-0653">Protein transport</keyword>
<keyword id="KW-1267">Proteomics identification</keyword>
<keyword id="KW-1185">Reference proteome</keyword>
<keyword id="KW-0813">Transport</keyword>
<keyword id="KW-0862">Zinc</keyword>